<accession>G5EEI4</accession>
<accession>O76830</accession>
<gene>
    <name evidence="10 16" type="primary">asp-1</name>
    <name evidence="16" type="ORF">Y39B6A.20</name>
</gene>
<evidence type="ECO:0000250" key="1">
    <source>
        <dbReference type="UniProtKB" id="P0DJD7"/>
    </source>
</evidence>
<evidence type="ECO:0000250" key="2">
    <source>
        <dbReference type="UniProtKB" id="Q9N9H4"/>
    </source>
</evidence>
<evidence type="ECO:0000255" key="3"/>
<evidence type="ECO:0000255" key="4">
    <source>
        <dbReference type="PROSITE-ProRule" id="PRU00498"/>
    </source>
</evidence>
<evidence type="ECO:0000255" key="5">
    <source>
        <dbReference type="PROSITE-ProRule" id="PRU01103"/>
    </source>
</evidence>
<evidence type="ECO:0000255" key="6">
    <source>
        <dbReference type="RuleBase" id="RU000454"/>
    </source>
</evidence>
<evidence type="ECO:0000269" key="7">
    <source>
    </source>
</evidence>
<evidence type="ECO:0000269" key="8">
    <source>
    </source>
</evidence>
<evidence type="ECO:0000269" key="9">
    <source>
    </source>
</evidence>
<evidence type="ECO:0000303" key="10">
    <source>
    </source>
</evidence>
<evidence type="ECO:0000305" key="11"/>
<evidence type="ECO:0000305" key="12">
    <source>
    </source>
</evidence>
<evidence type="ECO:0000312" key="13">
    <source>
        <dbReference type="EMBL" id="AAF19445.1"/>
    </source>
</evidence>
<evidence type="ECO:0000312" key="14">
    <source>
        <dbReference type="EMBL" id="CAA08899.1"/>
    </source>
</evidence>
<evidence type="ECO:0000312" key="15">
    <source>
        <dbReference type="Proteomes" id="UP000001940"/>
    </source>
</evidence>
<evidence type="ECO:0000312" key="16">
    <source>
        <dbReference type="WormBase" id="Y39B6A.20"/>
    </source>
</evidence>
<keyword id="KW-0064">Aspartyl protease</keyword>
<keyword id="KW-0963">Cytoplasm</keyword>
<keyword id="KW-1015">Disulfide bond</keyword>
<keyword id="KW-0325">Glycoprotein</keyword>
<keyword id="KW-0378">Hydrolase</keyword>
<keyword id="KW-0458">Lysosome</keyword>
<keyword id="KW-1210">Necrosis</keyword>
<keyword id="KW-0645">Protease</keyword>
<keyword id="KW-1185">Reference proteome</keyword>
<keyword id="KW-0964">Secreted</keyword>
<keyword id="KW-0732">Signal</keyword>
<protein>
    <recommendedName>
        <fullName evidence="10 16">Aspartic protease 1</fullName>
        <ecNumber evidence="2">3.4.23.-</ecNumber>
    </recommendedName>
</protein>
<organism evidence="13">
    <name type="scientific">Caenorhabditis elegans</name>
    <dbReference type="NCBI Taxonomy" id="6239"/>
    <lineage>
        <taxon>Eukaryota</taxon>
        <taxon>Metazoa</taxon>
        <taxon>Ecdysozoa</taxon>
        <taxon>Nematoda</taxon>
        <taxon>Chromadorea</taxon>
        <taxon>Rhabditida</taxon>
        <taxon>Rhabditina</taxon>
        <taxon>Rhabditomorpha</taxon>
        <taxon>Rhabditoidea</taxon>
        <taxon>Rhabditidae</taxon>
        <taxon>Peloderinae</taxon>
        <taxon>Caenorhabditis</taxon>
    </lineage>
</organism>
<proteinExistence type="evidence at protein level"/>
<comment type="function">
    <text evidence="8 9">Aspartic protease, which is part of the necrosis cell death pathway (PubMed:12410314, PubMed:26795495). Promotes B.thuringiensis Cry6Aa stability by preventing its proteolysis by host gut proteases. Required for Cry6Aa-induced necrotic death of intestinal cells (PubMed:26795495). Cry6Aa uptake into the host intestinal cells triggers an increase in intracellular Ca(2+) levels leading to lysosome rupture and to the subsequent release of asp-1 which leads to necrosis (PubMed:26795495).</text>
</comment>
<comment type="subunit">
    <text evidence="9">Interacts with B.thuringiensis endotoxin Cry6Aa; the interaction prevents Cry6Aa proteolysis by host gut proteases.</text>
</comment>
<comment type="subcellular location">
    <subcellularLocation>
        <location evidence="7">Cytoplasm</location>
    </subcellularLocation>
    <subcellularLocation>
        <location evidence="12">Lysosome</location>
    </subcellularLocation>
    <subcellularLocation>
        <location evidence="11">Secreted</location>
    </subcellularLocation>
</comment>
<comment type="developmental stage">
    <text evidence="7">Expression begins at the 2-fold embryonic stage and continues throughout the larval stages (at protein level) (PubMed:10854422). During the early stages of larval development, specifically expressed in the intestinal cells with the highest levels in the posterior intestinal cells int7 and int8 (PubMed:10854422). Not expressed in adults (PubMed:10854422).</text>
</comment>
<comment type="induction">
    <text evidence="9">Up-regulated by B.thuringiensis endotoxin Cry6Aa (at protein level).</text>
</comment>
<comment type="disruption phenotype">
    <text evidence="8">RNAi-mediated knockdown partially prevents neuronal degeneration in a mec-4(u231), deg-1(u38) or gsa-1(Q227L) gain-of-function mutant background.</text>
</comment>
<comment type="similarity">
    <text evidence="3 5 6">Belongs to the peptidase A1 family.</text>
</comment>
<dbReference type="EC" id="3.4.23.-" evidence="2"/>
<dbReference type="EMBL" id="AF208526">
    <property type="protein sequence ID" value="AAF19442.1"/>
    <property type="molecule type" value="mRNA"/>
</dbReference>
<dbReference type="EMBL" id="AJ009861">
    <property type="protein sequence ID" value="CAA08899.1"/>
    <property type="molecule type" value="mRNA"/>
</dbReference>
<dbReference type="EMBL" id="AF210248">
    <property type="protein sequence ID" value="AAF19445.1"/>
    <property type="molecule type" value="Genomic_DNA"/>
</dbReference>
<dbReference type="EMBL" id="BX284605">
    <property type="protein sequence ID" value="CAC51056.1"/>
    <property type="molecule type" value="Genomic_DNA"/>
</dbReference>
<dbReference type="PIR" id="T45033">
    <property type="entry name" value="T45033"/>
</dbReference>
<dbReference type="RefSeq" id="NP_741677.1">
    <property type="nucleotide sequence ID" value="NM_171587.6"/>
</dbReference>
<dbReference type="SMR" id="G5EEI4"/>
<dbReference type="FunCoup" id="G5EEI4">
    <property type="interactions" value="9"/>
</dbReference>
<dbReference type="IntAct" id="G5EEI4">
    <property type="interactions" value="4"/>
</dbReference>
<dbReference type="MINT" id="G5EEI4"/>
<dbReference type="STRING" id="6239.Y39B6A.20.2"/>
<dbReference type="MEROPS" id="A01.053"/>
<dbReference type="GlyCosmos" id="G5EEI4">
    <property type="glycosylation" value="1 site, No reported glycans"/>
</dbReference>
<dbReference type="PaxDb" id="6239-Y39B6A.20.1"/>
<dbReference type="PeptideAtlas" id="G5EEI4"/>
<dbReference type="EnsemblMetazoa" id="Y39B6A.20.1">
    <property type="protein sequence ID" value="Y39B6A.20.1"/>
    <property type="gene ID" value="WBGene00000214"/>
</dbReference>
<dbReference type="GeneID" id="180251"/>
<dbReference type="KEGG" id="cel:CELE_Y39B6A.20"/>
<dbReference type="AGR" id="WB:WBGene00000214"/>
<dbReference type="CTD" id="180251"/>
<dbReference type="WormBase" id="Y39B6A.20">
    <property type="protein sequence ID" value="CE21681"/>
    <property type="gene ID" value="WBGene00000214"/>
    <property type="gene designation" value="asp-1"/>
</dbReference>
<dbReference type="eggNOG" id="KOG1339">
    <property type="taxonomic scope" value="Eukaryota"/>
</dbReference>
<dbReference type="GeneTree" id="ENSGT00970000195900"/>
<dbReference type="HOGENOM" id="CLU_013253_3_4_1"/>
<dbReference type="InParanoid" id="G5EEI4"/>
<dbReference type="OMA" id="ACATKSM"/>
<dbReference type="OrthoDB" id="5853681at2759"/>
<dbReference type="PhylomeDB" id="G5EEI4"/>
<dbReference type="Reactome" id="R-CEL-2022377">
    <property type="pathway name" value="Metabolism of Angiotensinogen to Angiotensins"/>
</dbReference>
<dbReference type="SignaLink" id="G5EEI4"/>
<dbReference type="PRO" id="PR:G5EEI4"/>
<dbReference type="Proteomes" id="UP000001940">
    <property type="component" value="Chromosome V"/>
</dbReference>
<dbReference type="Bgee" id="WBGene00000214">
    <property type="expression patterns" value="Expressed in larva and 5 other cell types or tissues"/>
</dbReference>
<dbReference type="GO" id="GO:0005737">
    <property type="term" value="C:cytoplasm"/>
    <property type="evidence" value="ECO:0000314"/>
    <property type="project" value="WormBase"/>
</dbReference>
<dbReference type="GO" id="GO:0098591">
    <property type="term" value="C:external side of apical plasma membrane"/>
    <property type="evidence" value="ECO:0000314"/>
    <property type="project" value="WormBase"/>
</dbReference>
<dbReference type="GO" id="GO:0005576">
    <property type="term" value="C:extracellular region"/>
    <property type="evidence" value="ECO:0007669"/>
    <property type="project" value="UniProtKB-SubCell"/>
</dbReference>
<dbReference type="GO" id="GO:0005764">
    <property type="term" value="C:lysosome"/>
    <property type="evidence" value="ECO:0000318"/>
    <property type="project" value="GO_Central"/>
</dbReference>
<dbReference type="GO" id="GO:0004190">
    <property type="term" value="F:aspartic-type endopeptidase activity"/>
    <property type="evidence" value="ECO:0000318"/>
    <property type="project" value="GO_Central"/>
</dbReference>
<dbReference type="GO" id="GO:0006915">
    <property type="term" value="P:apoptotic process"/>
    <property type="evidence" value="ECO:0000318"/>
    <property type="project" value="GO_Central"/>
</dbReference>
<dbReference type="GO" id="GO:0006508">
    <property type="term" value="P:proteolysis"/>
    <property type="evidence" value="ECO:0000318"/>
    <property type="project" value="GO_Central"/>
</dbReference>
<dbReference type="CDD" id="cd05471">
    <property type="entry name" value="pepsin_like"/>
    <property type="match status" value="1"/>
</dbReference>
<dbReference type="FunFam" id="2.40.70.10:FF:000052">
    <property type="entry name" value="ASpartyl Protease"/>
    <property type="match status" value="1"/>
</dbReference>
<dbReference type="FunFam" id="2.40.70.10:FF:000086">
    <property type="entry name" value="ASpartyl Protease"/>
    <property type="match status" value="1"/>
</dbReference>
<dbReference type="Gene3D" id="2.40.70.10">
    <property type="entry name" value="Acid Proteases"/>
    <property type="match status" value="2"/>
</dbReference>
<dbReference type="InterPro" id="IPR001461">
    <property type="entry name" value="Aspartic_peptidase_A1"/>
</dbReference>
<dbReference type="InterPro" id="IPR001969">
    <property type="entry name" value="Aspartic_peptidase_AS"/>
</dbReference>
<dbReference type="InterPro" id="IPR012848">
    <property type="entry name" value="Aspartic_peptidase_N"/>
</dbReference>
<dbReference type="InterPro" id="IPR034164">
    <property type="entry name" value="Pepsin-like_dom"/>
</dbReference>
<dbReference type="InterPro" id="IPR033121">
    <property type="entry name" value="PEPTIDASE_A1"/>
</dbReference>
<dbReference type="InterPro" id="IPR021109">
    <property type="entry name" value="Peptidase_aspartic_dom_sf"/>
</dbReference>
<dbReference type="PANTHER" id="PTHR47966:SF8">
    <property type="entry name" value="ASPARTIC PROTEASE 1-RELATED"/>
    <property type="match status" value="1"/>
</dbReference>
<dbReference type="PANTHER" id="PTHR47966">
    <property type="entry name" value="BETA-SITE APP-CLEAVING ENZYME, ISOFORM A-RELATED"/>
    <property type="match status" value="1"/>
</dbReference>
<dbReference type="Pfam" id="PF07966">
    <property type="entry name" value="A1_Propeptide"/>
    <property type="match status" value="1"/>
</dbReference>
<dbReference type="Pfam" id="PF00026">
    <property type="entry name" value="Asp"/>
    <property type="match status" value="1"/>
</dbReference>
<dbReference type="PRINTS" id="PR00792">
    <property type="entry name" value="PEPSIN"/>
</dbReference>
<dbReference type="SUPFAM" id="SSF50630">
    <property type="entry name" value="Acid proteases"/>
    <property type="match status" value="1"/>
</dbReference>
<dbReference type="PROSITE" id="PS00141">
    <property type="entry name" value="ASP_PROTEASE"/>
    <property type="match status" value="1"/>
</dbReference>
<dbReference type="PROSITE" id="PS51767">
    <property type="entry name" value="PEPTIDASE_A1"/>
    <property type="match status" value="1"/>
</dbReference>
<reference evidence="13" key="1">
    <citation type="journal article" date="2000" name="J. Biol. Chem.">
        <title>Aspartic proteases from the nematode Caenorhabditis elegans. Structural organization and developmental and cell-specific expression of asp-1.</title>
        <authorList>
            <person name="Tcherepanova I."/>
            <person name="Bhattacharyya L."/>
            <person name="Rubin C.S."/>
            <person name="Freedman J.H."/>
        </authorList>
    </citation>
    <scope>NUCLEOTIDE SEQUENCE [GENOMIC DNA / MRNA]</scope>
    <scope>SUBCELLULAR LOCATION</scope>
    <scope>DEVELOPMENTAL STAGE</scope>
</reference>
<reference evidence="14" key="2">
    <citation type="submission" date="1998-08" db="EMBL/GenBank/DDBJ databases">
        <authorList>
            <person name="Kraev A.S."/>
        </authorList>
    </citation>
    <scope>NUCLEOTIDE SEQUENCE [MRNA]</scope>
    <source>
        <strain evidence="14">Bristol N2</strain>
    </source>
</reference>
<reference evidence="15" key="3">
    <citation type="journal article" date="1998" name="Science">
        <title>Genome sequence of the nematode C. elegans: a platform for investigating biology.</title>
        <authorList>
            <consortium name="The C. elegans sequencing consortium"/>
        </authorList>
    </citation>
    <scope>NUCLEOTIDE SEQUENCE [LARGE SCALE GENOMIC DNA]</scope>
    <source>
        <strain evidence="15">Bristol N2</strain>
    </source>
</reference>
<reference evidence="11" key="4">
    <citation type="journal article" date="2002" name="Nature">
        <title>Specific aspartyl and calpain proteases are required for neurodegeneration in C. elegans.</title>
        <authorList>
            <person name="Syntichaki P."/>
            <person name="Xu K."/>
            <person name="Driscoll M."/>
            <person name="Tavernarakis N."/>
        </authorList>
    </citation>
    <scope>FUNCTION</scope>
    <scope>DISRUPTION PHENOTYPE</scope>
</reference>
<reference evidence="11" key="5">
    <citation type="journal article" date="2016" name="PLoS Pathog.">
        <title>Bacillus thuringiensis Crystal Protein Cry6Aa Triggers Caenorhabditis elegans Necrosis Pathway Mediated by Aspartic Protease (ASP-1).</title>
        <authorList>
            <person name="Zhang F."/>
            <person name="Peng D."/>
            <person name="Cheng C."/>
            <person name="Zhou W."/>
            <person name="Ju S."/>
            <person name="Wan D."/>
            <person name="Yu Z."/>
            <person name="Shi J."/>
            <person name="Deng Y."/>
            <person name="Wang F."/>
            <person name="Ye X."/>
            <person name="Hu Z."/>
            <person name="Lin J."/>
            <person name="Ruan L."/>
            <person name="Sun M."/>
        </authorList>
    </citation>
    <scope>FUNCTION</scope>
    <scope>INTERACTION WITH B.THURINGIENSIS CRY6AA</scope>
    <scope>INDUCTION</scope>
    <scope>IDENTIFICATION BY MASS SPECTROMETRY</scope>
</reference>
<name>ASP1_CAEEL</name>
<sequence>MQTFVLLALVAACSAAVIQVPTHKTESLRAKLIKEGKYTAFLASQHAARAQQLNTGFQPFVDYFDDFYLGNITLGTPPQPATVVLDTGSSNLWVIDAACKTQACNGYPDSGYTKQKFDTTKSTTFVKETRKFSIQYGSGSCNGYLGKDVLNFGGLTVQSQEFGVSTHLADVFGYQPVDGILGLGWPALAVDQVVPPMQNLIAQKQLDAPLFTVWLDRNLQIAQGTPGGLITYGAIDTVNCAKQVTYVPLSAKTYWQFPLDAFAVGTYSETKKDQVISDTGTSWLGAPNTIVSAIVKQTKAVFDWSTELYTVDCSTMKTQPDLIFTIGGAQFPVKSVEYVLDLQLGGGKCALAVFSMGSGGFGPSWILGDTFIRQYCNVYDIGNGQIGFATAVHKGL</sequence>
<feature type="signal peptide" evidence="3">
    <location>
        <begin position="1"/>
        <end position="15"/>
    </location>
</feature>
<feature type="chain" id="PRO_5015092016" description="Aspartic protease 1" evidence="3">
    <location>
        <begin position="16"/>
        <end position="396"/>
    </location>
</feature>
<feature type="domain" description="Peptidase A1" evidence="5">
    <location>
        <begin position="68"/>
        <end position="389"/>
    </location>
</feature>
<feature type="active site" evidence="5">
    <location>
        <position position="86"/>
    </location>
</feature>
<feature type="active site" evidence="5">
    <location>
        <position position="278"/>
    </location>
</feature>
<feature type="glycosylation site" description="N-linked (GlcNAc...) asparagine" evidence="4">
    <location>
        <position position="71"/>
    </location>
</feature>
<feature type="disulfide bond" evidence="1">
    <location>
        <begin position="99"/>
        <end position="104"/>
    </location>
</feature>
<feature type="disulfide bond" evidence="5">
    <location>
        <begin position="313"/>
        <end position="349"/>
    </location>
</feature>
<feature type="sequence conflict" description="In Ref. 2; CAA08899." evidence="11" ref="2">
    <original>LALVA</original>
    <variation>SPLW</variation>
    <location>
        <begin position="7"/>
        <end position="11"/>
    </location>
</feature>
<feature type="sequence conflict" description="In Ref. 2; CAA08899." evidence="11" ref="2">
    <original>P</original>
    <variation>T</variation>
    <location>
        <position position="186"/>
    </location>
</feature>